<sequence>MSNATNNTLGSLLPQLEAAANSNSLYGGMVPNLRFNITMIVIWGILLTIHVVQLLMRQYWFSIAFICTGILEVLGFIGRTWSHSNVADMDAFLLNMICLTIAPVFTMGGIYYQLAKLIEVYGHRFSLLPSPMAYSFIFICSDIVSLVVQAVGGGLCGVAVTDGTSTTTGNHVFIAGLAIQVASMAIFLMLWFHFLFRIYISVRWEHINSRPISLSLLKISQTEVDYLYREKFHFLRLEPKRWVFHYFNLAMTVAVLTIFTRCCYRLAELVVGWDGYLITHEWYFIILDALMMAIATVTLTIFHPGFAFKGRSTSIPITPGHVDPETLPHTDDVEDILDTSDSKQFDIEKEEFQASMKYPISTFKQFMSKIANLFSSKKKAKL</sequence>
<keyword id="KW-1003">Cell membrane</keyword>
<keyword id="KW-0325">Glycoprotein</keyword>
<keyword id="KW-0445">Lipid transport</keyword>
<keyword id="KW-0472">Membrane</keyword>
<keyword id="KW-0812">Transmembrane</keyword>
<keyword id="KW-1133">Transmembrane helix</keyword>
<keyword id="KW-0813">Transport</keyword>
<comment type="function">
    <text evidence="1">Catalyzes the ATP-dependent translocation of sphingoid long-chain bases (LCBs) from the cytoplasmic site toward the extracytoplasmic side of the membrane (flip-flop). Involved in the establishment of the functional lipid asymmetry of the plasma membrane. Regulates intracellular levels of LCBs, sphingolipid precursors that are growth inhibitory at increased levels (By similarity).</text>
</comment>
<comment type="subcellular location">
    <subcellularLocation>
        <location evidence="1">Cell membrane</location>
        <topology>Multi-pass membrane protein</topology>
    </subcellularLocation>
</comment>
<comment type="induction">
    <text evidence="1">In response to loss of mitochondrial DNA in a transcription factor PDR3-dependent manner. Induced in response to altered glycerophospholipid asymmetry of the plasma membrane in a transcription factor PDR1-dependent manner (By similarity).</text>
</comment>
<comment type="similarity">
    <text evidence="3">Belongs to the lipid-translocating exporter (LTE) (TC 9.A.26.1) family.</text>
</comment>
<name>RSB1_YEAS1</name>
<organism>
    <name type="scientific">Saccharomyces cerevisiae (strain RM11-1a)</name>
    <name type="common">Baker's yeast</name>
    <dbReference type="NCBI Taxonomy" id="285006"/>
    <lineage>
        <taxon>Eukaryota</taxon>
        <taxon>Fungi</taxon>
        <taxon>Dikarya</taxon>
        <taxon>Ascomycota</taxon>
        <taxon>Saccharomycotina</taxon>
        <taxon>Saccharomycetes</taxon>
        <taxon>Saccharomycetales</taxon>
        <taxon>Saccharomycetaceae</taxon>
        <taxon>Saccharomyces</taxon>
    </lineage>
</organism>
<dbReference type="EMBL" id="CH408045">
    <property type="protein sequence ID" value="EDV10654.1"/>
    <property type="molecule type" value="Genomic_DNA"/>
</dbReference>
<dbReference type="SMR" id="B3LJA1"/>
<dbReference type="GlyCosmos" id="B3LJA1">
    <property type="glycosylation" value="2 sites, No reported glycans"/>
</dbReference>
<dbReference type="HOGENOM" id="CLU_033465_6_3_1"/>
<dbReference type="OrthoDB" id="37671at4893"/>
<dbReference type="Proteomes" id="UP000008335">
    <property type="component" value="Unassembled WGS sequence"/>
</dbReference>
<dbReference type="GO" id="GO:0000324">
    <property type="term" value="C:fungal-type vacuole"/>
    <property type="evidence" value="ECO:0007669"/>
    <property type="project" value="TreeGrafter"/>
</dbReference>
<dbReference type="GO" id="GO:0005886">
    <property type="term" value="C:plasma membrane"/>
    <property type="evidence" value="ECO:0007669"/>
    <property type="project" value="UniProtKB-SubCell"/>
</dbReference>
<dbReference type="GO" id="GO:0006869">
    <property type="term" value="P:lipid transport"/>
    <property type="evidence" value="ECO:0007669"/>
    <property type="project" value="UniProtKB-KW"/>
</dbReference>
<dbReference type="InterPro" id="IPR007568">
    <property type="entry name" value="RTA1"/>
</dbReference>
<dbReference type="PANTHER" id="PTHR31465">
    <property type="entry name" value="PROTEIN RTA1-RELATED"/>
    <property type="match status" value="1"/>
</dbReference>
<dbReference type="PANTHER" id="PTHR31465:SF9">
    <property type="entry name" value="SPHINGOID LONG-CHAIN BASE TRANSPORTER RSB1"/>
    <property type="match status" value="1"/>
</dbReference>
<dbReference type="Pfam" id="PF04479">
    <property type="entry name" value="RTA1"/>
    <property type="match status" value="1"/>
</dbReference>
<proteinExistence type="inferred from homology"/>
<reference key="1">
    <citation type="submission" date="2005-03" db="EMBL/GenBank/DDBJ databases">
        <title>Annotation of the Saccharomyces cerevisiae RM11-1a genome.</title>
        <authorList>
            <consortium name="The Broad Institute Genome Sequencing Platform"/>
            <person name="Birren B.W."/>
            <person name="Lander E.S."/>
            <person name="Galagan J.E."/>
            <person name="Nusbaum C."/>
            <person name="Devon K."/>
            <person name="Cuomo C."/>
            <person name="Jaffe D.B."/>
            <person name="Butler J."/>
            <person name="Alvarez P."/>
            <person name="Gnerre S."/>
            <person name="Grabherr M."/>
            <person name="Kleber M."/>
            <person name="Mauceli E.W."/>
            <person name="Brockman W."/>
            <person name="MacCallum I.A."/>
            <person name="Rounsley S."/>
            <person name="Young S.K."/>
            <person name="LaButti K."/>
            <person name="Pushparaj V."/>
            <person name="DeCaprio D."/>
            <person name="Crawford M."/>
            <person name="Koehrsen M."/>
            <person name="Engels R."/>
            <person name="Montgomery P."/>
            <person name="Pearson M."/>
            <person name="Howarth C."/>
            <person name="Larson L."/>
            <person name="Luoma S."/>
            <person name="White J."/>
            <person name="O'Leary S."/>
            <person name="Kodira C.D."/>
            <person name="Zeng Q."/>
            <person name="Yandava C."/>
            <person name="Alvarado L."/>
            <person name="Pratt S."/>
            <person name="Kruglyak L."/>
        </authorList>
    </citation>
    <scope>NUCLEOTIDE SEQUENCE [LARGE SCALE GENOMIC DNA]</scope>
    <source>
        <strain>RM11-1a</strain>
    </source>
</reference>
<evidence type="ECO:0000250" key="1"/>
<evidence type="ECO:0000255" key="2"/>
<evidence type="ECO:0000305" key="3"/>
<gene>
    <name type="primary">RSB1</name>
    <name type="ORF">SCRG_01451</name>
</gene>
<accession>B3LJA1</accession>
<protein>
    <recommendedName>
        <fullName>Sphingoid long-chain base transporter RSB1</fullName>
    </recommendedName>
</protein>
<feature type="chain" id="PRO_0000393314" description="Sphingoid long-chain base transporter RSB1" evidence="1">
    <location>
        <begin position="1"/>
        <end position="382"/>
    </location>
</feature>
<feature type="topological domain" description="Extracellular" evidence="1">
    <location>
        <begin position="1"/>
        <end position="34"/>
    </location>
</feature>
<feature type="transmembrane region" description="Helical" evidence="2">
    <location>
        <begin position="35"/>
        <end position="55"/>
    </location>
</feature>
<feature type="topological domain" description="Cytoplasmic" evidence="1">
    <location>
        <begin position="56"/>
        <end position="57"/>
    </location>
</feature>
<feature type="transmembrane region" description="Helical" evidence="2">
    <location>
        <begin position="58"/>
        <end position="78"/>
    </location>
</feature>
<feature type="topological domain" description="Extracellular" evidence="1">
    <location>
        <begin position="79"/>
        <end position="90"/>
    </location>
</feature>
<feature type="transmembrane region" description="Helical" evidence="2">
    <location>
        <begin position="91"/>
        <end position="111"/>
    </location>
</feature>
<feature type="topological domain" description="Cytoplasmic" evidence="1">
    <location>
        <begin position="112"/>
        <end position="135"/>
    </location>
</feature>
<feature type="transmembrane region" description="Helical" evidence="2">
    <location>
        <begin position="136"/>
        <end position="156"/>
    </location>
</feature>
<feature type="topological domain" description="Extracellular" evidence="1">
    <location>
        <begin position="157"/>
        <end position="171"/>
    </location>
</feature>
<feature type="transmembrane region" description="Helical" evidence="2">
    <location>
        <begin position="172"/>
        <end position="192"/>
    </location>
</feature>
<feature type="topological domain" description="Cytoplasmic" evidence="1">
    <location>
        <begin position="193"/>
        <end position="241"/>
    </location>
</feature>
<feature type="transmembrane region" description="Helical" evidence="2">
    <location>
        <begin position="242"/>
        <end position="262"/>
    </location>
</feature>
<feature type="topological domain" description="Extracellular" evidence="1">
    <location>
        <begin position="263"/>
        <end position="281"/>
    </location>
</feature>
<feature type="transmembrane region" description="Helical" evidence="2">
    <location>
        <begin position="282"/>
        <end position="302"/>
    </location>
</feature>
<feature type="topological domain" description="Cytoplasmic" evidence="1">
    <location>
        <begin position="303"/>
        <end position="382"/>
    </location>
</feature>
<feature type="glycosylation site" description="N-linked (GlcNAc...) asparagine" evidence="2">
    <location>
        <position position="3"/>
    </location>
</feature>
<feature type="glycosylation site" description="N-linked (GlcNAc...) asparagine" evidence="2">
    <location>
        <position position="6"/>
    </location>
</feature>